<keyword id="KW-0963">Cytoplasm</keyword>
<keyword id="KW-0489">Methyltransferase</keyword>
<keyword id="KW-0694">RNA-binding</keyword>
<keyword id="KW-0698">rRNA processing</keyword>
<keyword id="KW-0949">S-adenosyl-L-methionine</keyword>
<keyword id="KW-0808">Transferase</keyword>
<protein>
    <recommendedName>
        <fullName evidence="1">Ribosomal RNA large subunit methyltransferase K/L</fullName>
    </recommendedName>
    <domain>
        <recommendedName>
            <fullName evidence="1">23S rRNA m2G2445 methyltransferase</fullName>
            <ecNumber evidence="1">2.1.1.173</ecNumber>
        </recommendedName>
        <alternativeName>
            <fullName evidence="1">rRNA (guanine-N(2)-)-methyltransferase RlmL</fullName>
        </alternativeName>
    </domain>
    <domain>
        <recommendedName>
            <fullName evidence="1">23S rRNA m7G2069 methyltransferase</fullName>
            <ecNumber evidence="1">2.1.1.264</ecNumber>
        </recommendedName>
        <alternativeName>
            <fullName evidence="1">rRNA (guanine-N(7)-)-methyltransferase RlmK</fullName>
        </alternativeName>
    </domain>
</protein>
<proteinExistence type="inferred from homology"/>
<organism>
    <name type="scientific">Aliivibrio fischeri (strain MJ11)</name>
    <name type="common">Vibrio fischeri</name>
    <dbReference type="NCBI Taxonomy" id="388396"/>
    <lineage>
        <taxon>Bacteria</taxon>
        <taxon>Pseudomonadati</taxon>
        <taxon>Pseudomonadota</taxon>
        <taxon>Gammaproteobacteria</taxon>
        <taxon>Vibrionales</taxon>
        <taxon>Vibrionaceae</taxon>
        <taxon>Aliivibrio</taxon>
    </lineage>
</organism>
<accession>B5FE19</accession>
<reference key="1">
    <citation type="submission" date="2008-08" db="EMBL/GenBank/DDBJ databases">
        <title>Complete sequence of Vibrio fischeri strain MJ11.</title>
        <authorList>
            <person name="Mandel M.J."/>
            <person name="Stabb E.V."/>
            <person name="Ruby E.G."/>
            <person name="Ferriera S."/>
            <person name="Johnson J."/>
            <person name="Kravitz S."/>
            <person name="Beeson K."/>
            <person name="Sutton G."/>
            <person name="Rogers Y.-H."/>
            <person name="Friedman R."/>
            <person name="Frazier M."/>
            <person name="Venter J.C."/>
        </authorList>
    </citation>
    <scope>NUCLEOTIDE SEQUENCE [LARGE SCALE GENOMIC DNA]</scope>
    <source>
        <strain>MJ11</strain>
    </source>
</reference>
<evidence type="ECO:0000255" key="1">
    <source>
        <dbReference type="HAMAP-Rule" id="MF_01858"/>
    </source>
</evidence>
<dbReference type="EC" id="2.1.1.173" evidence="1"/>
<dbReference type="EC" id="2.1.1.264" evidence="1"/>
<dbReference type="EMBL" id="CP001139">
    <property type="protein sequence ID" value="ACH67248.1"/>
    <property type="molecule type" value="Genomic_DNA"/>
</dbReference>
<dbReference type="RefSeq" id="WP_012534301.1">
    <property type="nucleotide sequence ID" value="NC_011184.1"/>
</dbReference>
<dbReference type="SMR" id="B5FE19"/>
<dbReference type="KEGG" id="vfm:VFMJ11_1365"/>
<dbReference type="HOGENOM" id="CLU_014042_2_0_6"/>
<dbReference type="Proteomes" id="UP000001857">
    <property type="component" value="Chromosome I"/>
</dbReference>
<dbReference type="GO" id="GO:0005737">
    <property type="term" value="C:cytoplasm"/>
    <property type="evidence" value="ECO:0007669"/>
    <property type="project" value="UniProtKB-SubCell"/>
</dbReference>
<dbReference type="GO" id="GO:0052915">
    <property type="term" value="F:23S rRNA (guanine(2445)-N(2))-methyltransferase activity"/>
    <property type="evidence" value="ECO:0007669"/>
    <property type="project" value="UniProtKB-UniRule"/>
</dbReference>
<dbReference type="GO" id="GO:0003723">
    <property type="term" value="F:RNA binding"/>
    <property type="evidence" value="ECO:0007669"/>
    <property type="project" value="UniProtKB-KW"/>
</dbReference>
<dbReference type="GO" id="GO:0070043">
    <property type="term" value="F:rRNA (guanine-N7-)-methyltransferase activity"/>
    <property type="evidence" value="ECO:0007669"/>
    <property type="project" value="UniProtKB-UniRule"/>
</dbReference>
<dbReference type="CDD" id="cd02440">
    <property type="entry name" value="AdoMet_MTases"/>
    <property type="match status" value="1"/>
</dbReference>
<dbReference type="CDD" id="cd11715">
    <property type="entry name" value="THUMP_AdoMetMT"/>
    <property type="match status" value="1"/>
</dbReference>
<dbReference type="FunFam" id="3.40.50.150:FF:000039">
    <property type="entry name" value="Ribosomal RNA large subunit methyltransferase K/L"/>
    <property type="match status" value="1"/>
</dbReference>
<dbReference type="Gene3D" id="3.30.2130.30">
    <property type="match status" value="1"/>
</dbReference>
<dbReference type="Gene3D" id="3.30.750.80">
    <property type="entry name" value="RNA methyltransferase domain (HRMD) like"/>
    <property type="match status" value="1"/>
</dbReference>
<dbReference type="Gene3D" id="3.40.50.150">
    <property type="entry name" value="Vaccinia Virus protein VP39"/>
    <property type="match status" value="2"/>
</dbReference>
<dbReference type="HAMAP" id="MF_01858">
    <property type="entry name" value="23SrRNA_methyltr_KL"/>
    <property type="match status" value="1"/>
</dbReference>
<dbReference type="InterPro" id="IPR017244">
    <property type="entry name" value="23SrRNA_methyltr_KL"/>
</dbReference>
<dbReference type="InterPro" id="IPR002052">
    <property type="entry name" value="DNA_methylase_N6_adenine_CS"/>
</dbReference>
<dbReference type="InterPro" id="IPR000241">
    <property type="entry name" value="RlmKL-like_Mtase"/>
</dbReference>
<dbReference type="InterPro" id="IPR053943">
    <property type="entry name" value="RlmKL-like_Mtase_CS"/>
</dbReference>
<dbReference type="InterPro" id="IPR054170">
    <property type="entry name" value="RlmL_1st"/>
</dbReference>
<dbReference type="InterPro" id="IPR019614">
    <property type="entry name" value="SAM-dep_methyl-trfase"/>
</dbReference>
<dbReference type="InterPro" id="IPR029063">
    <property type="entry name" value="SAM-dependent_MTases_sf"/>
</dbReference>
<dbReference type="InterPro" id="IPR004114">
    <property type="entry name" value="THUMP_dom"/>
</dbReference>
<dbReference type="NCBIfam" id="NF008748">
    <property type="entry name" value="PRK11783.1"/>
    <property type="match status" value="1"/>
</dbReference>
<dbReference type="PANTHER" id="PTHR47313">
    <property type="entry name" value="RIBOSOMAL RNA LARGE SUBUNIT METHYLTRANSFERASE K/L"/>
    <property type="match status" value="1"/>
</dbReference>
<dbReference type="PANTHER" id="PTHR47313:SF1">
    <property type="entry name" value="RIBOSOMAL RNA LARGE SUBUNIT METHYLTRANSFERASE K_L"/>
    <property type="match status" value="1"/>
</dbReference>
<dbReference type="Pfam" id="PF10672">
    <property type="entry name" value="Methyltrans_SAM"/>
    <property type="match status" value="1"/>
</dbReference>
<dbReference type="Pfam" id="PF22020">
    <property type="entry name" value="RlmL_1st"/>
    <property type="match status" value="1"/>
</dbReference>
<dbReference type="Pfam" id="PF02926">
    <property type="entry name" value="THUMP"/>
    <property type="match status" value="1"/>
</dbReference>
<dbReference type="Pfam" id="PF01170">
    <property type="entry name" value="UPF0020"/>
    <property type="match status" value="1"/>
</dbReference>
<dbReference type="PIRSF" id="PIRSF037618">
    <property type="entry name" value="RNA_Mtase_bacteria_prd"/>
    <property type="match status" value="1"/>
</dbReference>
<dbReference type="SMART" id="SM00981">
    <property type="entry name" value="THUMP"/>
    <property type="match status" value="1"/>
</dbReference>
<dbReference type="SUPFAM" id="SSF53335">
    <property type="entry name" value="S-adenosyl-L-methionine-dependent methyltransferases"/>
    <property type="match status" value="2"/>
</dbReference>
<dbReference type="PROSITE" id="PS51165">
    <property type="entry name" value="THUMP"/>
    <property type="match status" value="1"/>
</dbReference>
<dbReference type="PROSITE" id="PS01261">
    <property type="entry name" value="UPF0020"/>
    <property type="match status" value="1"/>
</dbReference>
<feature type="chain" id="PRO_0000366849" description="Ribosomal RNA large subunit methyltransferase K/L">
    <location>
        <begin position="1"/>
        <end position="705"/>
    </location>
</feature>
<feature type="domain" description="THUMP" evidence="1">
    <location>
        <begin position="43"/>
        <end position="154"/>
    </location>
</feature>
<comment type="function">
    <text evidence="1">Specifically methylates the guanine in position 2445 (m2G2445) and the guanine in position 2069 (m7G2069) of 23S rRNA.</text>
</comment>
<comment type="catalytic activity">
    <reaction evidence="1">
        <text>guanosine(2445) in 23S rRNA + S-adenosyl-L-methionine = N(2)-methylguanosine(2445) in 23S rRNA + S-adenosyl-L-homocysteine + H(+)</text>
        <dbReference type="Rhea" id="RHEA:42740"/>
        <dbReference type="Rhea" id="RHEA-COMP:10215"/>
        <dbReference type="Rhea" id="RHEA-COMP:10216"/>
        <dbReference type="ChEBI" id="CHEBI:15378"/>
        <dbReference type="ChEBI" id="CHEBI:57856"/>
        <dbReference type="ChEBI" id="CHEBI:59789"/>
        <dbReference type="ChEBI" id="CHEBI:74269"/>
        <dbReference type="ChEBI" id="CHEBI:74481"/>
        <dbReference type="EC" id="2.1.1.173"/>
    </reaction>
</comment>
<comment type="catalytic activity">
    <reaction evidence="1">
        <text>guanosine(2069) in 23S rRNA + S-adenosyl-L-methionine = N(2)-methylguanosine(2069) in 23S rRNA + S-adenosyl-L-homocysteine + H(+)</text>
        <dbReference type="Rhea" id="RHEA:43772"/>
        <dbReference type="Rhea" id="RHEA-COMP:10688"/>
        <dbReference type="Rhea" id="RHEA-COMP:10689"/>
        <dbReference type="ChEBI" id="CHEBI:15378"/>
        <dbReference type="ChEBI" id="CHEBI:57856"/>
        <dbReference type="ChEBI" id="CHEBI:59789"/>
        <dbReference type="ChEBI" id="CHEBI:74269"/>
        <dbReference type="ChEBI" id="CHEBI:74481"/>
        <dbReference type="EC" id="2.1.1.264"/>
    </reaction>
</comment>
<comment type="subcellular location">
    <subcellularLocation>
        <location evidence="1">Cytoplasm</location>
    </subcellularLocation>
</comment>
<comment type="similarity">
    <text evidence="1">Belongs to the methyltransferase superfamily. RlmKL family.</text>
</comment>
<sequence>MKKYLAITSKGLENLLADELIALGVTDPKVVHAGVKFEAPIEVVYRCCLWSRIASRFIQILSEFDVRDDMDLYLGASSINWPSYFSADKTLVVDFNGTNREIRNSQYGALKVKDAIVDRFTKADLPRPNISKVEPDLRVHMRLSGEKGILGFDLVGSGLHQRGYRTEAGRAPLRETLAAALVMRSTWDESKPLLDPMCGSGTLLIEAALMACEMAPGVKREKWCFEALNDFDAELWAEIRSEARVKSRRGVKKVDARFYGFDRDYRVIQTARENARRAGVEDLITFDVGDATKVERPEGFENGVILCNPPYGERLSTEPALIALYSEFGRQLKEVFGGCTASIYSSNDDLLACLRMRADKQFKLNNGALPCVQKNYSITESAERKEAVSVEVAPEFMNRLKKNIGKIGKWARKEKLDCYRIYDADLPDYNAAIDVYKDYIIIQEYAAPKTISEDKARRRLTDMIRATVLVTGVETNNVILKVRQKQSGKNQYQKLAEKSRYFDVEEYGVKLIVNLQDYLDTGLFLDHKLTRKMLGEMAAGKDFLNLFAYTGSATVHAACGGAKSTMTIDMSRTYLEWAQKNMNTNGQTGTQHQFLQADCLQWLQQADGEFDLIFIDPPTFSNSKRMEQTFDVQRDHIMLLENLKRMLRENGTIVFSNNKRNFKMDDAALEKAGLKAKNISKQTLPLDFARNKHIHNCWIITHKED</sequence>
<name>RLMKL_ALIFM</name>
<gene>
    <name evidence="1" type="primary">rlmL</name>
    <name type="ordered locus">VFMJ11_1365</name>
</gene>